<accession>B5BAI4</accession>
<protein>
    <recommendedName>
        <fullName evidence="1">Large ribosomal subunit protein bL32</fullName>
    </recommendedName>
    <alternativeName>
        <fullName evidence="3">50S ribosomal protein L32</fullName>
    </alternativeName>
</protein>
<comment type="similarity">
    <text evidence="1">Belongs to the bacterial ribosomal protein bL32 family.</text>
</comment>
<evidence type="ECO:0000255" key="1">
    <source>
        <dbReference type="HAMAP-Rule" id="MF_00340"/>
    </source>
</evidence>
<evidence type="ECO:0000256" key="2">
    <source>
        <dbReference type="SAM" id="MobiDB-lite"/>
    </source>
</evidence>
<evidence type="ECO:0000305" key="3"/>
<name>RL32_SALPK</name>
<dbReference type="EMBL" id="FM200053">
    <property type="protein sequence ID" value="CAR59728.1"/>
    <property type="molecule type" value="Genomic_DNA"/>
</dbReference>
<dbReference type="RefSeq" id="WP_000290727.1">
    <property type="nucleotide sequence ID" value="NC_011147.1"/>
</dbReference>
<dbReference type="SMR" id="B5BAI4"/>
<dbReference type="GeneID" id="93776319"/>
<dbReference type="KEGG" id="sek:SSPA1544"/>
<dbReference type="HOGENOM" id="CLU_129084_2_1_6"/>
<dbReference type="Proteomes" id="UP000001869">
    <property type="component" value="Chromosome"/>
</dbReference>
<dbReference type="GO" id="GO:0015934">
    <property type="term" value="C:large ribosomal subunit"/>
    <property type="evidence" value="ECO:0007669"/>
    <property type="project" value="InterPro"/>
</dbReference>
<dbReference type="GO" id="GO:0003735">
    <property type="term" value="F:structural constituent of ribosome"/>
    <property type="evidence" value="ECO:0007669"/>
    <property type="project" value="InterPro"/>
</dbReference>
<dbReference type="GO" id="GO:0006412">
    <property type="term" value="P:translation"/>
    <property type="evidence" value="ECO:0007669"/>
    <property type="project" value="UniProtKB-UniRule"/>
</dbReference>
<dbReference type="HAMAP" id="MF_00340">
    <property type="entry name" value="Ribosomal_bL32"/>
    <property type="match status" value="1"/>
</dbReference>
<dbReference type="InterPro" id="IPR002677">
    <property type="entry name" value="Ribosomal_bL32"/>
</dbReference>
<dbReference type="InterPro" id="IPR044957">
    <property type="entry name" value="Ribosomal_bL32_bact"/>
</dbReference>
<dbReference type="InterPro" id="IPR011332">
    <property type="entry name" value="Ribosomal_zn-bd"/>
</dbReference>
<dbReference type="NCBIfam" id="TIGR01031">
    <property type="entry name" value="rpmF_bact"/>
    <property type="match status" value="1"/>
</dbReference>
<dbReference type="PANTHER" id="PTHR35534">
    <property type="entry name" value="50S RIBOSOMAL PROTEIN L32"/>
    <property type="match status" value="1"/>
</dbReference>
<dbReference type="PANTHER" id="PTHR35534:SF1">
    <property type="entry name" value="LARGE RIBOSOMAL SUBUNIT PROTEIN BL32"/>
    <property type="match status" value="1"/>
</dbReference>
<dbReference type="Pfam" id="PF01783">
    <property type="entry name" value="Ribosomal_L32p"/>
    <property type="match status" value="1"/>
</dbReference>
<dbReference type="SUPFAM" id="SSF57829">
    <property type="entry name" value="Zn-binding ribosomal proteins"/>
    <property type="match status" value="1"/>
</dbReference>
<organism>
    <name type="scientific">Salmonella paratyphi A (strain AKU_12601)</name>
    <dbReference type="NCBI Taxonomy" id="554290"/>
    <lineage>
        <taxon>Bacteria</taxon>
        <taxon>Pseudomonadati</taxon>
        <taxon>Pseudomonadota</taxon>
        <taxon>Gammaproteobacteria</taxon>
        <taxon>Enterobacterales</taxon>
        <taxon>Enterobacteriaceae</taxon>
        <taxon>Salmonella</taxon>
    </lineage>
</organism>
<keyword id="KW-0687">Ribonucleoprotein</keyword>
<keyword id="KW-0689">Ribosomal protein</keyword>
<proteinExistence type="inferred from homology"/>
<reference key="1">
    <citation type="journal article" date="2009" name="BMC Genomics">
        <title>Pseudogene accumulation in the evolutionary histories of Salmonella enterica serovars Paratyphi A and Typhi.</title>
        <authorList>
            <person name="Holt K.E."/>
            <person name="Thomson N.R."/>
            <person name="Wain J."/>
            <person name="Langridge G.C."/>
            <person name="Hasan R."/>
            <person name="Bhutta Z.A."/>
            <person name="Quail M.A."/>
            <person name="Norbertczak H."/>
            <person name="Walker D."/>
            <person name="Simmonds M."/>
            <person name="White B."/>
            <person name="Bason N."/>
            <person name="Mungall K."/>
            <person name="Dougan G."/>
            <person name="Parkhill J."/>
        </authorList>
    </citation>
    <scope>NUCLEOTIDE SEQUENCE [LARGE SCALE GENOMIC DNA]</scope>
    <source>
        <strain>AKU_12601</strain>
    </source>
</reference>
<feature type="chain" id="PRO_1000120170" description="Large ribosomal subunit protein bL32">
    <location>
        <begin position="1"/>
        <end position="57"/>
    </location>
</feature>
<feature type="region of interest" description="Disordered" evidence="2">
    <location>
        <begin position="1"/>
        <end position="38"/>
    </location>
</feature>
<gene>
    <name evidence="1" type="primary">rpmF</name>
    <name type="ordered locus">SSPA1544</name>
</gene>
<sequence length="57" mass="6446">MAVQQNKPTRSKRGMRRSHDALTAVTSLSVDKTSGEKHLRHHITADGYYRGRKVIAK</sequence>